<comment type="function">
    <text evidence="1">May be involved in pectin and/or xylans biosynthesis in cell walls.</text>
</comment>
<comment type="pathway">
    <text>Glycan metabolism; pectin biosynthesis.</text>
</comment>
<comment type="subcellular location">
    <subcellularLocation>
        <location evidence="1">Golgi apparatus membrane</location>
        <topology evidence="1">Single-pass type II membrane protein</topology>
    </subcellularLocation>
</comment>
<comment type="similarity">
    <text evidence="3">Belongs to the glycosyltransferase 8 family.</text>
</comment>
<comment type="sequence caution" evidence="3">
    <conflict type="erroneous initiation">
        <sequence resource="EMBL-CDS" id="CAB83116"/>
    </conflict>
</comment>
<accession>Q8VYF4</accession>
<accession>Q9LZJ9</accession>
<name>GATL7_ARATH</name>
<keyword id="KW-0961">Cell wall biogenesis/degradation</keyword>
<keyword id="KW-0325">Glycoprotein</keyword>
<keyword id="KW-0328">Glycosyltransferase</keyword>
<keyword id="KW-0333">Golgi apparatus</keyword>
<keyword id="KW-0472">Membrane</keyword>
<keyword id="KW-1185">Reference proteome</keyword>
<keyword id="KW-0735">Signal-anchor</keyword>
<keyword id="KW-0808">Transferase</keyword>
<keyword id="KW-0812">Transmembrane</keyword>
<keyword id="KW-1133">Transmembrane helix</keyword>
<organism>
    <name type="scientific">Arabidopsis thaliana</name>
    <name type="common">Mouse-ear cress</name>
    <dbReference type="NCBI Taxonomy" id="3702"/>
    <lineage>
        <taxon>Eukaryota</taxon>
        <taxon>Viridiplantae</taxon>
        <taxon>Streptophyta</taxon>
        <taxon>Embryophyta</taxon>
        <taxon>Tracheophyta</taxon>
        <taxon>Spermatophyta</taxon>
        <taxon>Magnoliopsida</taxon>
        <taxon>eudicotyledons</taxon>
        <taxon>Gunneridae</taxon>
        <taxon>Pentapetalae</taxon>
        <taxon>rosids</taxon>
        <taxon>malvids</taxon>
        <taxon>Brassicales</taxon>
        <taxon>Brassicaceae</taxon>
        <taxon>Camelineae</taxon>
        <taxon>Arabidopsis</taxon>
    </lineage>
</organism>
<sequence>MLWIMRFSGLFSAALVIIVLSPSLQSFPPAEAIRSSHLDAYLRFPSSDPPPHRFSFRKAPVFRNAADCAAADIDSGVCNPSLVHVAITLDFEYLRGSIAAVHSILKHSSCPESVFFHFLVSETDLESLIRSTFPELKLKVYYFDPEIVRTLISTSVRQALEQPLNYARNYLADLLEPCVRRVIYLDSDLIVVDDIAKLWMTKLGSKTIGAPEYCHANFTKYFTPAFWSDERFSGAFSGRKPCYFNTGVMVMDLERWRRVGYTEVIEKWMEIQKSDRIYELGSLPPFLLVFAGEVAPIEHRWNQHGLGGDNVRGSCRDLHPGPVSLLHWSGSGKPWFRLDSRRPCPLDTLWAPYDLYGHYSR</sequence>
<feature type="chain" id="PRO_0000392609" description="Probable galacturonosyltransferase-like 7">
    <location>
        <begin position="1"/>
        <end position="361"/>
    </location>
</feature>
<feature type="transmembrane region" description="Helical; Signal-anchor for type II membrane protein" evidence="2">
    <location>
        <begin position="1"/>
        <end position="21"/>
    </location>
</feature>
<feature type="topological domain" description="Lumenal" evidence="2">
    <location>
        <begin position="22"/>
        <end position="361"/>
    </location>
</feature>
<feature type="glycosylation site" description="N-linked (GlcNAc...) asparagine" evidence="2">
    <location>
        <position position="217"/>
    </location>
</feature>
<evidence type="ECO:0000250" key="1"/>
<evidence type="ECO:0000255" key="2"/>
<evidence type="ECO:0000305" key="3"/>
<proteinExistence type="evidence at transcript level"/>
<dbReference type="EC" id="2.4.1.-"/>
<dbReference type="EMBL" id="AL162651">
    <property type="protein sequence ID" value="CAB83116.1"/>
    <property type="status" value="ALT_INIT"/>
    <property type="molecule type" value="Genomic_DNA"/>
</dbReference>
<dbReference type="EMBL" id="CP002686">
    <property type="protein sequence ID" value="AEE80377.1"/>
    <property type="molecule type" value="Genomic_DNA"/>
</dbReference>
<dbReference type="EMBL" id="AY072114">
    <property type="protein sequence ID" value="AAL59936.1"/>
    <property type="molecule type" value="mRNA"/>
</dbReference>
<dbReference type="EMBL" id="AY096607">
    <property type="protein sequence ID" value="AAM20257.1"/>
    <property type="molecule type" value="mRNA"/>
</dbReference>
<dbReference type="EMBL" id="BT000748">
    <property type="protein sequence ID" value="AAN31889.1"/>
    <property type="molecule type" value="mRNA"/>
</dbReference>
<dbReference type="PIR" id="T48055">
    <property type="entry name" value="T48055"/>
</dbReference>
<dbReference type="RefSeq" id="NP_191825.2">
    <property type="nucleotide sequence ID" value="NM_116131.5"/>
</dbReference>
<dbReference type="SMR" id="Q8VYF4"/>
<dbReference type="FunCoup" id="Q8VYF4">
    <property type="interactions" value="717"/>
</dbReference>
<dbReference type="STRING" id="3702.Q8VYF4"/>
<dbReference type="CAZy" id="GT8">
    <property type="family name" value="Glycosyltransferase Family 8"/>
</dbReference>
<dbReference type="GlyCosmos" id="Q8VYF4">
    <property type="glycosylation" value="1 site, No reported glycans"/>
</dbReference>
<dbReference type="GlyGen" id="Q8VYF4">
    <property type="glycosylation" value="1 site"/>
</dbReference>
<dbReference type="PaxDb" id="3702-AT3G62660.1"/>
<dbReference type="ProteomicsDB" id="248563"/>
<dbReference type="EnsemblPlants" id="AT3G62660.1">
    <property type="protein sequence ID" value="AT3G62660.1"/>
    <property type="gene ID" value="AT3G62660"/>
</dbReference>
<dbReference type="GeneID" id="825440"/>
<dbReference type="Gramene" id="AT3G62660.1">
    <property type="protein sequence ID" value="AT3G62660.1"/>
    <property type="gene ID" value="AT3G62660"/>
</dbReference>
<dbReference type="KEGG" id="ath:AT3G62660"/>
<dbReference type="Araport" id="AT3G62660"/>
<dbReference type="TAIR" id="AT3G62660">
    <property type="gene designation" value="GATL7"/>
</dbReference>
<dbReference type="eggNOG" id="ENOG502QTN8">
    <property type="taxonomic scope" value="Eukaryota"/>
</dbReference>
<dbReference type="HOGENOM" id="CLU_034713_1_0_1"/>
<dbReference type="InParanoid" id="Q8VYF4"/>
<dbReference type="OMA" id="WIIQFSG"/>
<dbReference type="OrthoDB" id="411524at2759"/>
<dbReference type="PhylomeDB" id="Q8VYF4"/>
<dbReference type="UniPathway" id="UPA00845"/>
<dbReference type="PRO" id="PR:Q8VYF4"/>
<dbReference type="Proteomes" id="UP000006548">
    <property type="component" value="Chromosome 3"/>
</dbReference>
<dbReference type="ExpressionAtlas" id="Q8VYF4">
    <property type="expression patterns" value="baseline and differential"/>
</dbReference>
<dbReference type="GO" id="GO:0005794">
    <property type="term" value="C:Golgi apparatus"/>
    <property type="evidence" value="ECO:0000314"/>
    <property type="project" value="TAIR"/>
</dbReference>
<dbReference type="GO" id="GO:0000139">
    <property type="term" value="C:Golgi membrane"/>
    <property type="evidence" value="ECO:0007669"/>
    <property type="project" value="UniProtKB-SubCell"/>
</dbReference>
<dbReference type="GO" id="GO:0047262">
    <property type="term" value="F:polygalacturonate 4-alpha-galacturonosyltransferase activity"/>
    <property type="evidence" value="ECO:0000250"/>
    <property type="project" value="TAIR"/>
</dbReference>
<dbReference type="GO" id="GO:0071555">
    <property type="term" value="P:cell wall organization"/>
    <property type="evidence" value="ECO:0007669"/>
    <property type="project" value="UniProtKB-KW"/>
</dbReference>
<dbReference type="GO" id="GO:0045489">
    <property type="term" value="P:pectin biosynthetic process"/>
    <property type="evidence" value="ECO:0007669"/>
    <property type="project" value="UniProtKB-UniPathway"/>
</dbReference>
<dbReference type="FunFam" id="3.90.550.10:FF:000024">
    <property type="entry name" value="Hexosyltransferase"/>
    <property type="match status" value="1"/>
</dbReference>
<dbReference type="Gene3D" id="3.90.550.10">
    <property type="entry name" value="Spore Coat Polysaccharide Biosynthesis Protein SpsA, Chain A"/>
    <property type="match status" value="1"/>
</dbReference>
<dbReference type="InterPro" id="IPR002495">
    <property type="entry name" value="Glyco_trans_8"/>
</dbReference>
<dbReference type="InterPro" id="IPR050748">
    <property type="entry name" value="Glycosyltrans_8_dom-fam"/>
</dbReference>
<dbReference type="InterPro" id="IPR029044">
    <property type="entry name" value="Nucleotide-diphossugar_trans"/>
</dbReference>
<dbReference type="PANTHER" id="PTHR13778:SF48">
    <property type="entry name" value="GALACTURONOSYLTRANSFERASE-LIKE 7-RELATED"/>
    <property type="match status" value="1"/>
</dbReference>
<dbReference type="PANTHER" id="PTHR13778">
    <property type="entry name" value="GLYCOSYLTRANSFERASE 8 DOMAIN-CONTAINING PROTEIN"/>
    <property type="match status" value="1"/>
</dbReference>
<dbReference type="Pfam" id="PF01501">
    <property type="entry name" value="Glyco_transf_8"/>
    <property type="match status" value="1"/>
</dbReference>
<dbReference type="SUPFAM" id="SSF53448">
    <property type="entry name" value="Nucleotide-diphospho-sugar transferases"/>
    <property type="match status" value="1"/>
</dbReference>
<reference key="1">
    <citation type="journal article" date="2000" name="Nature">
        <title>Sequence and analysis of chromosome 3 of the plant Arabidopsis thaliana.</title>
        <authorList>
            <person name="Salanoubat M."/>
            <person name="Lemcke K."/>
            <person name="Rieger M."/>
            <person name="Ansorge W."/>
            <person name="Unseld M."/>
            <person name="Fartmann B."/>
            <person name="Valle G."/>
            <person name="Bloecker H."/>
            <person name="Perez-Alonso M."/>
            <person name="Obermaier B."/>
            <person name="Delseny M."/>
            <person name="Boutry M."/>
            <person name="Grivell L.A."/>
            <person name="Mache R."/>
            <person name="Puigdomenech P."/>
            <person name="De Simone V."/>
            <person name="Choisne N."/>
            <person name="Artiguenave F."/>
            <person name="Robert C."/>
            <person name="Brottier P."/>
            <person name="Wincker P."/>
            <person name="Cattolico L."/>
            <person name="Weissenbach J."/>
            <person name="Saurin W."/>
            <person name="Quetier F."/>
            <person name="Schaefer M."/>
            <person name="Mueller-Auer S."/>
            <person name="Gabel C."/>
            <person name="Fuchs M."/>
            <person name="Benes V."/>
            <person name="Wurmbach E."/>
            <person name="Drzonek H."/>
            <person name="Erfle H."/>
            <person name="Jordan N."/>
            <person name="Bangert S."/>
            <person name="Wiedelmann R."/>
            <person name="Kranz H."/>
            <person name="Voss H."/>
            <person name="Holland R."/>
            <person name="Brandt P."/>
            <person name="Nyakatura G."/>
            <person name="Vezzi A."/>
            <person name="D'Angelo M."/>
            <person name="Pallavicini A."/>
            <person name="Toppo S."/>
            <person name="Simionati B."/>
            <person name="Conrad A."/>
            <person name="Hornischer K."/>
            <person name="Kauer G."/>
            <person name="Loehnert T.-H."/>
            <person name="Nordsiek G."/>
            <person name="Reichelt J."/>
            <person name="Scharfe M."/>
            <person name="Schoen O."/>
            <person name="Bargues M."/>
            <person name="Terol J."/>
            <person name="Climent J."/>
            <person name="Navarro P."/>
            <person name="Collado C."/>
            <person name="Perez-Perez A."/>
            <person name="Ottenwaelder B."/>
            <person name="Duchemin D."/>
            <person name="Cooke R."/>
            <person name="Laudie M."/>
            <person name="Berger-Llauro C."/>
            <person name="Purnelle B."/>
            <person name="Masuy D."/>
            <person name="de Haan M."/>
            <person name="Maarse A.C."/>
            <person name="Alcaraz J.-P."/>
            <person name="Cottet A."/>
            <person name="Casacuberta E."/>
            <person name="Monfort A."/>
            <person name="Argiriou A."/>
            <person name="Flores M."/>
            <person name="Liguori R."/>
            <person name="Vitale D."/>
            <person name="Mannhaupt G."/>
            <person name="Haase D."/>
            <person name="Schoof H."/>
            <person name="Rudd S."/>
            <person name="Zaccaria P."/>
            <person name="Mewes H.-W."/>
            <person name="Mayer K.F.X."/>
            <person name="Kaul S."/>
            <person name="Town C.D."/>
            <person name="Koo H.L."/>
            <person name="Tallon L.J."/>
            <person name="Jenkins J."/>
            <person name="Rooney T."/>
            <person name="Rizzo M."/>
            <person name="Walts A."/>
            <person name="Utterback T."/>
            <person name="Fujii C.Y."/>
            <person name="Shea T.P."/>
            <person name="Creasy T.H."/>
            <person name="Haas B."/>
            <person name="Maiti R."/>
            <person name="Wu D."/>
            <person name="Peterson J."/>
            <person name="Van Aken S."/>
            <person name="Pai G."/>
            <person name="Militscher J."/>
            <person name="Sellers P."/>
            <person name="Gill J.E."/>
            <person name="Feldblyum T.V."/>
            <person name="Preuss D."/>
            <person name="Lin X."/>
            <person name="Nierman W.C."/>
            <person name="Salzberg S.L."/>
            <person name="White O."/>
            <person name="Venter J.C."/>
            <person name="Fraser C.M."/>
            <person name="Kaneko T."/>
            <person name="Nakamura Y."/>
            <person name="Sato S."/>
            <person name="Kato T."/>
            <person name="Asamizu E."/>
            <person name="Sasamoto S."/>
            <person name="Kimura T."/>
            <person name="Idesawa K."/>
            <person name="Kawashima K."/>
            <person name="Kishida Y."/>
            <person name="Kiyokawa C."/>
            <person name="Kohara M."/>
            <person name="Matsumoto M."/>
            <person name="Matsuno A."/>
            <person name="Muraki A."/>
            <person name="Nakayama S."/>
            <person name="Nakazaki N."/>
            <person name="Shinpo S."/>
            <person name="Takeuchi C."/>
            <person name="Wada T."/>
            <person name="Watanabe A."/>
            <person name="Yamada M."/>
            <person name="Yasuda M."/>
            <person name="Tabata S."/>
        </authorList>
    </citation>
    <scope>NUCLEOTIDE SEQUENCE [LARGE SCALE GENOMIC DNA]</scope>
    <source>
        <strain>cv. Columbia</strain>
    </source>
</reference>
<reference key="2">
    <citation type="journal article" date="2017" name="Plant J.">
        <title>Araport11: a complete reannotation of the Arabidopsis thaliana reference genome.</title>
        <authorList>
            <person name="Cheng C.Y."/>
            <person name="Krishnakumar V."/>
            <person name="Chan A.P."/>
            <person name="Thibaud-Nissen F."/>
            <person name="Schobel S."/>
            <person name="Town C.D."/>
        </authorList>
    </citation>
    <scope>GENOME REANNOTATION</scope>
    <source>
        <strain>cv. Columbia</strain>
    </source>
</reference>
<reference key="3">
    <citation type="journal article" date="2003" name="Science">
        <title>Empirical analysis of transcriptional activity in the Arabidopsis genome.</title>
        <authorList>
            <person name="Yamada K."/>
            <person name="Lim J."/>
            <person name="Dale J.M."/>
            <person name="Chen H."/>
            <person name="Shinn P."/>
            <person name="Palm C.J."/>
            <person name="Southwick A.M."/>
            <person name="Wu H.C."/>
            <person name="Kim C.J."/>
            <person name="Nguyen M."/>
            <person name="Pham P.K."/>
            <person name="Cheuk R.F."/>
            <person name="Karlin-Newmann G."/>
            <person name="Liu S.X."/>
            <person name="Lam B."/>
            <person name="Sakano H."/>
            <person name="Wu T."/>
            <person name="Yu G."/>
            <person name="Miranda M."/>
            <person name="Quach H.L."/>
            <person name="Tripp M."/>
            <person name="Chang C.H."/>
            <person name="Lee J.M."/>
            <person name="Toriumi M.J."/>
            <person name="Chan M.M."/>
            <person name="Tang C.C."/>
            <person name="Onodera C.S."/>
            <person name="Deng J.M."/>
            <person name="Akiyama K."/>
            <person name="Ansari Y."/>
            <person name="Arakawa T."/>
            <person name="Banh J."/>
            <person name="Banno F."/>
            <person name="Bowser L."/>
            <person name="Brooks S.Y."/>
            <person name="Carninci P."/>
            <person name="Chao Q."/>
            <person name="Choy N."/>
            <person name="Enju A."/>
            <person name="Goldsmith A.D."/>
            <person name="Gurjal M."/>
            <person name="Hansen N.F."/>
            <person name="Hayashizaki Y."/>
            <person name="Johnson-Hopson C."/>
            <person name="Hsuan V.W."/>
            <person name="Iida K."/>
            <person name="Karnes M."/>
            <person name="Khan S."/>
            <person name="Koesema E."/>
            <person name="Ishida J."/>
            <person name="Jiang P.X."/>
            <person name="Jones T."/>
            <person name="Kawai J."/>
            <person name="Kamiya A."/>
            <person name="Meyers C."/>
            <person name="Nakajima M."/>
            <person name="Narusaka M."/>
            <person name="Seki M."/>
            <person name="Sakurai T."/>
            <person name="Satou M."/>
            <person name="Tamse R."/>
            <person name="Vaysberg M."/>
            <person name="Wallender E.K."/>
            <person name="Wong C."/>
            <person name="Yamamura Y."/>
            <person name="Yuan S."/>
            <person name="Shinozaki K."/>
            <person name="Davis R.W."/>
            <person name="Theologis A."/>
            <person name="Ecker J.R."/>
        </authorList>
    </citation>
    <scope>NUCLEOTIDE SEQUENCE [LARGE SCALE MRNA]</scope>
    <source>
        <strain>cv. Columbia</strain>
    </source>
</reference>
<reference key="4">
    <citation type="journal article" date="2006" name="Proc. Natl. Acad. Sci. U.S.A.">
        <title>Functional identification of an Arabidopsis pectin biosynthetic homogalacturonan galacturonosyltransferase.</title>
        <authorList>
            <person name="Sterling J.D."/>
            <person name="Atmodjo M.A."/>
            <person name="Inwood S.E."/>
            <person name="Kumar Kolli V.S."/>
            <person name="Quigley H.F."/>
            <person name="Hahn M.G."/>
            <person name="Mohnen D."/>
        </authorList>
    </citation>
    <scope>GENE FAMILY</scope>
    <scope>NOMENCLATURE</scope>
</reference>
<protein>
    <recommendedName>
        <fullName>Probable galacturonosyltransferase-like 7</fullName>
        <ecNumber>2.4.1.-</ecNumber>
    </recommendedName>
</protein>
<gene>
    <name type="primary">GATL7</name>
    <name type="ordered locus">At3g62660</name>
    <name type="ORF">F26K9.90</name>
</gene>